<reference key="1">
    <citation type="journal article" date="2004" name="Nucleic Acids Res.">
        <title>Whole genome comparisons of serotype 4b and 1/2a strains of the food-borne pathogen Listeria monocytogenes reveal new insights into the core genome components of this species.</title>
        <authorList>
            <person name="Nelson K.E."/>
            <person name="Fouts D.E."/>
            <person name="Mongodin E.F."/>
            <person name="Ravel J."/>
            <person name="DeBoy R.T."/>
            <person name="Kolonay J.F."/>
            <person name="Rasko D.A."/>
            <person name="Angiuoli S.V."/>
            <person name="Gill S.R."/>
            <person name="Paulsen I.T."/>
            <person name="Peterson J.D."/>
            <person name="White O."/>
            <person name="Nelson W.C."/>
            <person name="Nierman W.C."/>
            <person name="Beanan M.J."/>
            <person name="Brinkac L.M."/>
            <person name="Daugherty S.C."/>
            <person name="Dodson R.J."/>
            <person name="Durkin A.S."/>
            <person name="Madupu R."/>
            <person name="Haft D.H."/>
            <person name="Selengut J."/>
            <person name="Van Aken S.E."/>
            <person name="Khouri H.M."/>
            <person name="Fedorova N."/>
            <person name="Forberger H.A."/>
            <person name="Tran B."/>
            <person name="Kathariou S."/>
            <person name="Wonderling L.D."/>
            <person name="Uhlich G.A."/>
            <person name="Bayles D.O."/>
            <person name="Luchansky J.B."/>
            <person name="Fraser C.M."/>
        </authorList>
    </citation>
    <scope>NUCLEOTIDE SEQUENCE [LARGE SCALE GENOMIC DNA]</scope>
    <source>
        <strain>F2365</strain>
    </source>
</reference>
<evidence type="ECO:0000255" key="1">
    <source>
        <dbReference type="HAMAP-Rule" id="MF_00003"/>
    </source>
</evidence>
<gene>
    <name evidence="1" type="primary">rbfA</name>
    <name type="ordered locus">LMOf2365_1344</name>
</gene>
<dbReference type="EMBL" id="AE017262">
    <property type="protein sequence ID" value="AAT04119.1"/>
    <property type="molecule type" value="Genomic_DNA"/>
</dbReference>
<dbReference type="RefSeq" id="WP_003719600.1">
    <property type="nucleotide sequence ID" value="NC_002973.6"/>
</dbReference>
<dbReference type="SMR" id="Q71ZZ5"/>
<dbReference type="GeneID" id="93239203"/>
<dbReference type="KEGG" id="lmf:LMOf2365_1344"/>
<dbReference type="HOGENOM" id="CLU_089475_6_3_9"/>
<dbReference type="GO" id="GO:0005829">
    <property type="term" value="C:cytosol"/>
    <property type="evidence" value="ECO:0007669"/>
    <property type="project" value="TreeGrafter"/>
</dbReference>
<dbReference type="GO" id="GO:0043024">
    <property type="term" value="F:ribosomal small subunit binding"/>
    <property type="evidence" value="ECO:0007669"/>
    <property type="project" value="TreeGrafter"/>
</dbReference>
<dbReference type="GO" id="GO:0030490">
    <property type="term" value="P:maturation of SSU-rRNA"/>
    <property type="evidence" value="ECO:0007669"/>
    <property type="project" value="UniProtKB-UniRule"/>
</dbReference>
<dbReference type="FunFam" id="3.30.300.20:FF:000009">
    <property type="entry name" value="Ribosome-binding factor A"/>
    <property type="match status" value="1"/>
</dbReference>
<dbReference type="Gene3D" id="3.30.300.20">
    <property type="match status" value="1"/>
</dbReference>
<dbReference type="HAMAP" id="MF_00003">
    <property type="entry name" value="RbfA"/>
    <property type="match status" value="1"/>
</dbReference>
<dbReference type="InterPro" id="IPR015946">
    <property type="entry name" value="KH_dom-like_a/b"/>
</dbReference>
<dbReference type="InterPro" id="IPR000238">
    <property type="entry name" value="RbfA"/>
</dbReference>
<dbReference type="InterPro" id="IPR023799">
    <property type="entry name" value="RbfA_dom_sf"/>
</dbReference>
<dbReference type="InterPro" id="IPR020053">
    <property type="entry name" value="Ribosome-bd_factorA_CS"/>
</dbReference>
<dbReference type="NCBIfam" id="TIGR00082">
    <property type="entry name" value="rbfA"/>
    <property type="match status" value="1"/>
</dbReference>
<dbReference type="PANTHER" id="PTHR33515">
    <property type="entry name" value="RIBOSOME-BINDING FACTOR A, CHLOROPLASTIC-RELATED"/>
    <property type="match status" value="1"/>
</dbReference>
<dbReference type="PANTHER" id="PTHR33515:SF1">
    <property type="entry name" value="RIBOSOME-BINDING FACTOR A, CHLOROPLASTIC-RELATED"/>
    <property type="match status" value="1"/>
</dbReference>
<dbReference type="Pfam" id="PF02033">
    <property type="entry name" value="RBFA"/>
    <property type="match status" value="1"/>
</dbReference>
<dbReference type="SUPFAM" id="SSF89919">
    <property type="entry name" value="Ribosome-binding factor A, RbfA"/>
    <property type="match status" value="1"/>
</dbReference>
<dbReference type="PROSITE" id="PS01319">
    <property type="entry name" value="RBFA"/>
    <property type="match status" value="1"/>
</dbReference>
<sequence length="114" mass="12968">MNVRANRVSEQMKKELGDILNRKIKDPRLGFVTVTGVDVTGDLQEAKVFISILGTDKEKENTLLALAKAHGFIRSEIGRRIRLRKVPEMSFEIDNSIAYGNRIDELLRDLNNDQ</sequence>
<comment type="function">
    <text evidence="1">One of several proteins that assist in the late maturation steps of the functional core of the 30S ribosomal subunit. Associates with free 30S ribosomal subunits (but not with 30S subunits that are part of 70S ribosomes or polysomes). Required for efficient processing of 16S rRNA. May interact with the 5'-terminal helix region of 16S rRNA.</text>
</comment>
<comment type="subunit">
    <text evidence="1">Monomer. Binds 30S ribosomal subunits, but not 50S ribosomal subunits or 70S ribosomes.</text>
</comment>
<comment type="subcellular location">
    <subcellularLocation>
        <location evidence="1">Cytoplasm</location>
    </subcellularLocation>
</comment>
<comment type="similarity">
    <text evidence="1">Belongs to the RbfA family.</text>
</comment>
<organism>
    <name type="scientific">Listeria monocytogenes serotype 4b (strain F2365)</name>
    <dbReference type="NCBI Taxonomy" id="265669"/>
    <lineage>
        <taxon>Bacteria</taxon>
        <taxon>Bacillati</taxon>
        <taxon>Bacillota</taxon>
        <taxon>Bacilli</taxon>
        <taxon>Bacillales</taxon>
        <taxon>Listeriaceae</taxon>
        <taxon>Listeria</taxon>
    </lineage>
</organism>
<accession>Q71ZZ5</accession>
<proteinExistence type="inferred from homology"/>
<name>RBFA_LISMF</name>
<protein>
    <recommendedName>
        <fullName evidence="1">Ribosome-binding factor A</fullName>
    </recommendedName>
</protein>
<keyword id="KW-0963">Cytoplasm</keyword>
<keyword id="KW-0690">Ribosome biogenesis</keyword>
<feature type="chain" id="PRO_0000102687" description="Ribosome-binding factor A">
    <location>
        <begin position="1"/>
        <end position="114"/>
    </location>
</feature>